<sequence length="217" mass="24279">MAAQCVRLARRSLPALALSLRPSPRLLCTATKQKNSGQNLEEDMGQSEQKADPPATEKTLLEEKVKLEEQLKETVEKYKRALADTENLRQRSQKLVEEAKLYGIQAFCKDLLEVADVLEKATQCVPKEEIKDDNPHLKNLYEGLVMTEVQIQKVFTKHGLLKLNPVGAKFDPYEHEALFHTPVEGKEPGTVALVSKVGYKLHGRTLRPALVGVVKEA</sequence>
<keyword id="KW-0007">Acetylation</keyword>
<keyword id="KW-0143">Chaperone</keyword>
<keyword id="KW-0496">Mitochondrion</keyword>
<keyword id="KW-1185">Reference proteome</keyword>
<keyword id="KW-0809">Transit peptide</keyword>
<feature type="transit peptide" description="Mitochondrion" evidence="1">
    <location>
        <begin position="1"/>
        <end position="27"/>
    </location>
</feature>
<feature type="chain" id="PRO_0000043072" description="GrpE protein homolog 1, mitochondrial">
    <location>
        <begin position="28"/>
        <end position="217"/>
    </location>
</feature>
<feature type="region of interest" description="Disordered" evidence="4">
    <location>
        <begin position="29"/>
        <end position="56"/>
    </location>
</feature>
<feature type="compositionally biased region" description="Polar residues" evidence="4">
    <location>
        <begin position="30"/>
        <end position="39"/>
    </location>
</feature>
<feature type="modified residue" description="N6-acetyllysine; alternate" evidence="2">
    <location>
        <position position="94"/>
    </location>
</feature>
<feature type="modified residue" description="N6-succinyllysine; alternate" evidence="2">
    <location>
        <position position="94"/>
    </location>
</feature>
<feature type="modified residue" description="N6-acetyllysine" evidence="2">
    <location>
        <position position="100"/>
    </location>
</feature>
<feature type="modified residue" description="N6-succinyllysine" evidence="2">
    <location>
        <position position="120"/>
    </location>
</feature>
<feature type="modified residue" description="N6-acetyllysine; alternate" evidence="3">
    <location>
        <position position="215"/>
    </location>
</feature>
<feature type="modified residue" description="N6-succinyllysine; alternate" evidence="2">
    <location>
        <position position="215"/>
    </location>
</feature>
<feature type="sequence conflict" description="In Ref. 1; CAH89792." evidence="5" ref="1">
    <original>V</original>
    <variation>A</variation>
    <location>
        <position position="125"/>
    </location>
</feature>
<name>GRPE1_PONAB</name>
<proteinExistence type="evidence at transcript level"/>
<reference key="1">
    <citation type="submission" date="2004-11" db="EMBL/GenBank/DDBJ databases">
        <authorList>
            <consortium name="The German cDNA consortium"/>
        </authorList>
    </citation>
    <scope>NUCLEOTIDE SEQUENCE [LARGE SCALE MRNA]</scope>
    <source>
        <tissue>Heart</tissue>
    </source>
</reference>
<protein>
    <recommendedName>
        <fullName>GrpE protein homolog 1, mitochondrial</fullName>
    </recommendedName>
    <alternativeName>
        <fullName>Mt-GrpE#1</fullName>
    </alternativeName>
</protein>
<dbReference type="EMBL" id="CR859137">
    <property type="protein sequence ID" value="CAH91329.1"/>
    <property type="molecule type" value="mRNA"/>
</dbReference>
<dbReference type="EMBL" id="CR857509">
    <property type="protein sequence ID" value="CAH89792.1"/>
    <property type="molecule type" value="mRNA"/>
</dbReference>
<dbReference type="RefSeq" id="NP_001127196.2">
    <property type="nucleotide sequence ID" value="NM_001133724.2"/>
</dbReference>
<dbReference type="RefSeq" id="NP_001128810.1">
    <property type="nucleotide sequence ID" value="NM_001135338.1"/>
</dbReference>
<dbReference type="SMR" id="Q5RA81"/>
<dbReference type="FunCoup" id="Q5RA81">
    <property type="interactions" value="2759"/>
</dbReference>
<dbReference type="STRING" id="9601.ENSPPYP00000016282"/>
<dbReference type="Ensembl" id="ENSPPYT00000038566.1">
    <property type="protein sequence ID" value="ENSPPYP00000028706.1"/>
    <property type="gene ID" value="ENSPPYG00000035781.1"/>
</dbReference>
<dbReference type="GeneID" id="100174251"/>
<dbReference type="KEGG" id="pon:100174251"/>
<dbReference type="CTD" id="80273"/>
<dbReference type="eggNOG" id="KOG3003">
    <property type="taxonomic scope" value="Eukaryota"/>
</dbReference>
<dbReference type="GeneTree" id="ENSGT00390000005589"/>
<dbReference type="InParanoid" id="Q5RA81"/>
<dbReference type="OMA" id="PHRHQAI"/>
<dbReference type="OrthoDB" id="201635at2759"/>
<dbReference type="Proteomes" id="UP000001595">
    <property type="component" value="Chromosome 4"/>
</dbReference>
<dbReference type="GO" id="GO:0005654">
    <property type="term" value="C:nucleoplasm"/>
    <property type="evidence" value="ECO:0007669"/>
    <property type="project" value="Ensembl"/>
</dbReference>
<dbReference type="GO" id="GO:0001405">
    <property type="term" value="C:PAM complex, Tim23 associated import motor"/>
    <property type="evidence" value="ECO:0007669"/>
    <property type="project" value="TreeGrafter"/>
</dbReference>
<dbReference type="GO" id="GO:0000774">
    <property type="term" value="F:adenyl-nucleotide exchange factor activity"/>
    <property type="evidence" value="ECO:0007669"/>
    <property type="project" value="InterPro"/>
</dbReference>
<dbReference type="GO" id="GO:0042803">
    <property type="term" value="F:protein homodimerization activity"/>
    <property type="evidence" value="ECO:0007669"/>
    <property type="project" value="InterPro"/>
</dbReference>
<dbReference type="GO" id="GO:0051087">
    <property type="term" value="F:protein-folding chaperone binding"/>
    <property type="evidence" value="ECO:0007669"/>
    <property type="project" value="InterPro"/>
</dbReference>
<dbReference type="GO" id="GO:0051082">
    <property type="term" value="F:unfolded protein binding"/>
    <property type="evidence" value="ECO:0007669"/>
    <property type="project" value="Ensembl"/>
</dbReference>
<dbReference type="GO" id="GO:0006457">
    <property type="term" value="P:protein folding"/>
    <property type="evidence" value="ECO:0007669"/>
    <property type="project" value="InterPro"/>
</dbReference>
<dbReference type="GO" id="GO:0030150">
    <property type="term" value="P:protein import into mitochondrial matrix"/>
    <property type="evidence" value="ECO:0007669"/>
    <property type="project" value="TreeGrafter"/>
</dbReference>
<dbReference type="CDD" id="cd00446">
    <property type="entry name" value="GrpE"/>
    <property type="match status" value="1"/>
</dbReference>
<dbReference type="FunFam" id="2.30.22.10:FF:000002">
    <property type="entry name" value="GrpE protein homolog"/>
    <property type="match status" value="1"/>
</dbReference>
<dbReference type="FunFam" id="3.90.20.20:FF:000003">
    <property type="entry name" value="GrpE protein homolog"/>
    <property type="match status" value="1"/>
</dbReference>
<dbReference type="Gene3D" id="3.90.20.20">
    <property type="match status" value="1"/>
</dbReference>
<dbReference type="Gene3D" id="2.30.22.10">
    <property type="entry name" value="Head domain of nucleotide exchange factor GrpE"/>
    <property type="match status" value="1"/>
</dbReference>
<dbReference type="HAMAP" id="MF_01151">
    <property type="entry name" value="GrpE"/>
    <property type="match status" value="1"/>
</dbReference>
<dbReference type="InterPro" id="IPR000740">
    <property type="entry name" value="GrpE"/>
</dbReference>
<dbReference type="InterPro" id="IPR013805">
    <property type="entry name" value="GrpE_coiled_coil"/>
</dbReference>
<dbReference type="InterPro" id="IPR009012">
    <property type="entry name" value="GrpE_head"/>
</dbReference>
<dbReference type="PANTHER" id="PTHR21237">
    <property type="entry name" value="GRPE PROTEIN"/>
    <property type="match status" value="1"/>
</dbReference>
<dbReference type="PANTHER" id="PTHR21237:SF25">
    <property type="entry name" value="GRPE PROTEIN HOMOLOG 1, MITOCHONDRIAL"/>
    <property type="match status" value="1"/>
</dbReference>
<dbReference type="Pfam" id="PF01025">
    <property type="entry name" value="GrpE"/>
    <property type="match status" value="1"/>
</dbReference>
<dbReference type="PRINTS" id="PR00773">
    <property type="entry name" value="GRPEPROTEIN"/>
</dbReference>
<dbReference type="SUPFAM" id="SSF58014">
    <property type="entry name" value="Coiled-coil domain of nucleotide exchange factor GrpE"/>
    <property type="match status" value="1"/>
</dbReference>
<dbReference type="SUPFAM" id="SSF51064">
    <property type="entry name" value="Head domain of nucleotide exchange factor GrpE"/>
    <property type="match status" value="1"/>
</dbReference>
<dbReference type="PROSITE" id="PS01071">
    <property type="entry name" value="GRPE"/>
    <property type="match status" value="1"/>
</dbReference>
<accession>Q5RA81</accession>
<accession>Q5REL5</accession>
<gene>
    <name type="primary">GRPEL1</name>
</gene>
<evidence type="ECO:0000250" key="1"/>
<evidence type="ECO:0000250" key="2">
    <source>
        <dbReference type="UniProtKB" id="Q99LP6"/>
    </source>
</evidence>
<evidence type="ECO:0000250" key="3">
    <source>
        <dbReference type="UniProtKB" id="Q9HAV7"/>
    </source>
</evidence>
<evidence type="ECO:0000256" key="4">
    <source>
        <dbReference type="SAM" id="MobiDB-lite"/>
    </source>
</evidence>
<evidence type="ECO:0000305" key="5"/>
<comment type="function">
    <text evidence="1">Essential component of the PAM complex, a complex required for the translocation of transit peptide-containing proteins from the inner membrane into the mitochondrial matrix in an ATP-dependent manner. Seems to control the nucleotide-dependent binding of mitochondrial HSP70 to substrate proteins (By similarity).</text>
</comment>
<comment type="subunit">
    <text evidence="1">Probable component of the PAM complex at least composed of a mitochondrial HSP70 protein, GRPEL1 or GRPEL2, TIMM44, TIMM16/PAM16 and TIMM14/DNAJC19. Binds to HSP70, HSC70 and HSJ1B (By similarity).</text>
</comment>
<comment type="subcellular location">
    <subcellularLocation>
        <location evidence="1">Mitochondrion matrix</location>
    </subcellularLocation>
</comment>
<comment type="similarity">
    <text evidence="5">Belongs to the GrpE family.</text>
</comment>
<organism>
    <name type="scientific">Pongo abelii</name>
    <name type="common">Sumatran orangutan</name>
    <name type="synonym">Pongo pygmaeus abelii</name>
    <dbReference type="NCBI Taxonomy" id="9601"/>
    <lineage>
        <taxon>Eukaryota</taxon>
        <taxon>Metazoa</taxon>
        <taxon>Chordata</taxon>
        <taxon>Craniata</taxon>
        <taxon>Vertebrata</taxon>
        <taxon>Euteleostomi</taxon>
        <taxon>Mammalia</taxon>
        <taxon>Eutheria</taxon>
        <taxon>Euarchontoglires</taxon>
        <taxon>Primates</taxon>
        <taxon>Haplorrhini</taxon>
        <taxon>Catarrhini</taxon>
        <taxon>Hominidae</taxon>
        <taxon>Pongo</taxon>
    </lineage>
</organism>